<evidence type="ECO:0000250" key="1"/>
<evidence type="ECO:0000255" key="2"/>
<evidence type="ECO:0007829" key="3">
    <source>
        <dbReference type="PDB" id="5LY9"/>
    </source>
</evidence>
<evidence type="ECO:0007829" key="4">
    <source>
        <dbReference type="PDB" id="5M4T"/>
    </source>
</evidence>
<dbReference type="EMBL" id="X56761">
    <property type="protein sequence ID" value="CAA40080.1"/>
    <property type="molecule type" value="mRNA"/>
</dbReference>
<dbReference type="PIR" id="S18445">
    <property type="entry name" value="S18445"/>
</dbReference>
<dbReference type="PDB" id="5LY9">
    <property type="method" value="X-ray"/>
    <property type="resolution" value="1.65 A"/>
    <property type="chains" value="A/B=33-400"/>
</dbReference>
<dbReference type="PDB" id="5M4T">
    <property type="method" value="NMR"/>
    <property type="chains" value="A=404-475"/>
</dbReference>
<dbReference type="PDBsum" id="5LY9"/>
<dbReference type="PDBsum" id="5M4T"/>
<dbReference type="BMRB" id="P26331"/>
<dbReference type="SMR" id="P26331"/>
<dbReference type="ABCD" id="P26331">
    <property type="antibodies" value="5 sequenced antibodies"/>
</dbReference>
<dbReference type="GO" id="GO:0005886">
    <property type="term" value="C:plasma membrane"/>
    <property type="evidence" value="ECO:0007669"/>
    <property type="project" value="UniProtKB-SubCell"/>
</dbReference>
<dbReference type="GO" id="GO:0098552">
    <property type="term" value="C:side of membrane"/>
    <property type="evidence" value="ECO:0007669"/>
    <property type="project" value="UniProtKB-KW"/>
</dbReference>
<dbReference type="GO" id="GO:0042783">
    <property type="term" value="P:symbiont-mediated evasion of host immune response"/>
    <property type="evidence" value="ECO:0007669"/>
    <property type="project" value="InterPro"/>
</dbReference>
<dbReference type="Gene3D" id="3.90.150.10">
    <property type="entry name" value="Variant Surface Glycoprotein, subunit A domain 1"/>
    <property type="match status" value="1"/>
</dbReference>
<dbReference type="Gene3D" id="1.10.470.10">
    <property type="entry name" value="Variant Surface Glycoprotein, subunit A, domain 2"/>
    <property type="match status" value="1"/>
</dbReference>
<dbReference type="InterPro" id="IPR001812">
    <property type="entry name" value="Trypano_VSG_A_N_dom"/>
</dbReference>
<dbReference type="InterPro" id="IPR027446">
    <property type="entry name" value="VSG_C_dom_sf"/>
</dbReference>
<dbReference type="Pfam" id="PF00913">
    <property type="entry name" value="Trypan_glycop"/>
    <property type="match status" value="1"/>
</dbReference>
<dbReference type="SUPFAM" id="SSF58087">
    <property type="entry name" value="Variant surface glycoprotein (N-terminal domain)"/>
    <property type="match status" value="1"/>
</dbReference>
<dbReference type="SUPFAM" id="SSF118251">
    <property type="entry name" value="Variant surface glycoprotein MITAT 1.2, VSG 221, C-terminal domain"/>
    <property type="match status" value="1"/>
</dbReference>
<accession>P26331</accession>
<comment type="function">
    <text>VSG forms a coat on the surface of the parasite. The trypanosome evades the immune response of the host by expressing a series of antigenically distinct VSGs from an estimated 1000 VSG genes.</text>
</comment>
<comment type="subcellular location">
    <subcellularLocation>
        <location>Cell membrane</location>
        <topology>Lipid-anchor</topology>
        <topology>GPI-anchor</topology>
    </subcellularLocation>
    <text evidence="1">A soluble form is released from ruptured cells by the action of a PI-PLC.</text>
</comment>
<sequence>MATGRAKNTKWARWLSTAGLIIVVTLPATTMAAERTGLKATAWKPLCKLTTELSKVSGEMLNKGQEVISNIQKIKAAEYKVSIYLAKNPETQALQQSTLLRGYFARKTNGGLESYKTMGLATQIRSARAAAYLKGSIDEFLNLLESLKGGSENKCLVTTNADTAATRRETKLDDQECALSMPETKPEAATRTELTQTGYPNLQHGGGGTANTFQPTTSTGTCKLLSGHSTNGYPTTSALDTTAKVLAGYMTIPNTQVEATLANMQAMGNGHKATAPAWHEAWEARNREAKAKDLAYTNETGNLDTQPTLKALVKTLLLPKDNTEHNAEATKLEALFGGLAADKTKTYLDMVDAEIIPAGIAGRTTEAPLGKIHDTVELGDILSNYEMIAAQNVVTLKKNLDAVSKKQQTESAENKEKICNAAKDNQKACENLKEKGCVFNTESNKCELKKDVKEKLEKESKETEGKDEKANTTGSNSFLIHKAPLLLAFLLF</sequence>
<feature type="signal peptide">
    <location>
        <begin position="1"/>
        <end position="32"/>
    </location>
</feature>
<feature type="chain" id="PRO_0000036431" description="Variant surface glycoprotein MITAT 1.1">
    <location>
        <begin position="33"/>
        <end position="475"/>
    </location>
</feature>
<feature type="propeptide" id="PRO_0000036432" description="Removed in mature form" evidence="2">
    <location>
        <begin position="476"/>
        <end position="492"/>
    </location>
</feature>
<feature type="lipid moiety-binding region" description="GPI-anchor amidated serine" evidence="2">
    <location>
        <position position="475"/>
    </location>
</feature>
<feature type="glycosylation site" description="N-linked (GlcNAc...) asparagine" evidence="2">
    <location>
        <position position="298"/>
    </location>
</feature>
<feature type="glycosylation site" description="N-linked (GlcNAc...) asparagine" evidence="2">
    <location>
        <position position="471"/>
    </location>
</feature>
<feature type="disulfide bond" evidence="1">
    <location>
        <begin position="47"/>
        <end position="177"/>
    </location>
</feature>
<feature type="disulfide bond" evidence="1">
    <location>
        <begin position="155"/>
        <end position="222"/>
    </location>
</feature>
<feature type="helix" evidence="3">
    <location>
        <begin position="40"/>
        <end position="53"/>
    </location>
</feature>
<feature type="helix" evidence="3">
    <location>
        <begin position="56"/>
        <end position="87"/>
    </location>
</feature>
<feature type="helix" evidence="3">
    <location>
        <begin position="94"/>
        <end position="117"/>
    </location>
</feature>
<feature type="helix" evidence="3">
    <location>
        <begin position="119"/>
        <end position="146"/>
    </location>
</feature>
<feature type="turn" evidence="3">
    <location>
        <begin position="150"/>
        <end position="152"/>
    </location>
</feature>
<feature type="strand" evidence="3">
    <location>
        <begin position="155"/>
        <end position="160"/>
    </location>
</feature>
<feature type="strand" evidence="3">
    <location>
        <begin position="192"/>
        <end position="194"/>
    </location>
</feature>
<feature type="strand" evidence="3">
    <location>
        <begin position="205"/>
        <end position="210"/>
    </location>
</feature>
<feature type="strand" evidence="3">
    <location>
        <begin position="212"/>
        <end position="214"/>
    </location>
</feature>
<feature type="helix" evidence="3">
    <location>
        <begin position="223"/>
        <end position="225"/>
    </location>
</feature>
<feature type="turn" evidence="3">
    <location>
        <begin position="229"/>
        <end position="231"/>
    </location>
</feature>
<feature type="strand" evidence="3">
    <location>
        <begin position="232"/>
        <end position="237"/>
    </location>
</feature>
<feature type="strand" evidence="3">
    <location>
        <begin position="243"/>
        <end position="245"/>
    </location>
</feature>
<feature type="helix" evidence="3">
    <location>
        <begin position="246"/>
        <end position="248"/>
    </location>
</feature>
<feature type="strand" evidence="3">
    <location>
        <begin position="250"/>
        <end position="252"/>
    </location>
</feature>
<feature type="strand" evidence="3">
    <location>
        <begin position="254"/>
        <end position="257"/>
    </location>
</feature>
<feature type="helix" evidence="3">
    <location>
        <begin position="271"/>
        <end position="274"/>
    </location>
</feature>
<feature type="helix" evidence="3">
    <location>
        <begin position="276"/>
        <end position="286"/>
    </location>
</feature>
<feature type="helix" evidence="3">
    <location>
        <begin position="294"/>
        <end position="296"/>
    </location>
</feature>
<feature type="helix" evidence="3">
    <location>
        <begin position="303"/>
        <end position="305"/>
    </location>
</feature>
<feature type="helix" evidence="3">
    <location>
        <begin position="307"/>
        <end position="316"/>
    </location>
</feature>
<feature type="helix" evidence="3">
    <location>
        <begin position="327"/>
        <end position="336"/>
    </location>
</feature>
<feature type="strand" evidence="3">
    <location>
        <begin position="337"/>
        <end position="340"/>
    </location>
</feature>
<feature type="helix" evidence="3">
    <location>
        <begin position="341"/>
        <end position="344"/>
    </location>
</feature>
<feature type="helix" evidence="3">
    <location>
        <begin position="345"/>
        <end position="353"/>
    </location>
</feature>
<feature type="helix" evidence="3">
    <location>
        <begin position="360"/>
        <end position="362"/>
    </location>
</feature>
<feature type="helix" evidence="3">
    <location>
        <begin position="369"/>
        <end position="371"/>
    </location>
</feature>
<feature type="helix" evidence="3">
    <location>
        <begin position="375"/>
        <end position="399"/>
    </location>
</feature>
<feature type="helix" evidence="4">
    <location>
        <begin position="409"/>
        <end position="420"/>
    </location>
</feature>
<feature type="turn" evidence="4">
    <location>
        <begin position="421"/>
        <end position="424"/>
    </location>
</feature>
<feature type="helix" evidence="4">
    <location>
        <begin position="426"/>
        <end position="432"/>
    </location>
</feature>
<feature type="helix" evidence="4">
    <location>
        <begin position="433"/>
        <end position="435"/>
    </location>
</feature>
<feature type="strand" evidence="4">
    <location>
        <begin position="437"/>
        <end position="440"/>
    </location>
</feature>
<feature type="turn" evidence="4">
    <location>
        <begin position="441"/>
        <end position="444"/>
    </location>
</feature>
<feature type="strand" evidence="4">
    <location>
        <begin position="445"/>
        <end position="448"/>
    </location>
</feature>
<feature type="helix" evidence="4">
    <location>
        <begin position="450"/>
        <end position="457"/>
    </location>
</feature>
<feature type="strand" evidence="4">
    <location>
        <begin position="461"/>
        <end position="464"/>
    </location>
</feature>
<reference key="1">
    <citation type="journal article" date="1991" name="J. Mol. Biol.">
        <title>Variant specific glycoprotein of Trypanosoma brucei consists of two domains each having an independently conserved pattern of cysteine residues.</title>
        <authorList>
            <person name="Carrington M."/>
            <person name="Miller N."/>
            <person name="Blum M.L."/>
            <person name="Roditi I."/>
            <person name="Wiley D.C."/>
            <person name="Turner M.J."/>
        </authorList>
    </citation>
    <scope>NUCLEOTIDE SEQUENCE [MRNA]</scope>
    <source>
        <strain>Isolate MIAG 060</strain>
    </source>
</reference>
<name>VSM1_TRYBB</name>
<protein>
    <recommendedName>
        <fullName>Variant surface glycoprotein MITAT 1.1</fullName>
        <shortName>VSG</shortName>
    </recommendedName>
</protein>
<proteinExistence type="evidence at protein level"/>
<keyword id="KW-0002">3D-structure</keyword>
<keyword id="KW-1003">Cell membrane</keyword>
<keyword id="KW-1015">Disulfide bond</keyword>
<keyword id="KW-0325">Glycoprotein</keyword>
<keyword id="KW-0336">GPI-anchor</keyword>
<keyword id="KW-0449">Lipoprotein</keyword>
<keyword id="KW-0472">Membrane</keyword>
<keyword id="KW-0732">Signal</keyword>
<keyword id="KW-0821">Trypanosomiasis</keyword>
<organism>
    <name type="scientific">Trypanosoma brucei brucei</name>
    <dbReference type="NCBI Taxonomy" id="5702"/>
    <lineage>
        <taxon>Eukaryota</taxon>
        <taxon>Discoba</taxon>
        <taxon>Euglenozoa</taxon>
        <taxon>Kinetoplastea</taxon>
        <taxon>Metakinetoplastina</taxon>
        <taxon>Trypanosomatida</taxon>
        <taxon>Trypanosomatidae</taxon>
        <taxon>Trypanosoma</taxon>
    </lineage>
</organism>